<keyword id="KW-0963">Cytoplasm</keyword>
<keyword id="KW-0479">Metal-binding</keyword>
<keyword id="KW-0520">NAD</keyword>
<keyword id="KW-0560">Oxidoreductase</keyword>
<keyword id="KW-0862">Zinc</keyword>
<reference key="1">
    <citation type="submission" date="2008-01" db="EMBL/GenBank/DDBJ databases">
        <title>Complete sequence of Shewanella halifaxensis HAW-EB4.</title>
        <authorList>
            <consortium name="US DOE Joint Genome Institute"/>
            <person name="Copeland A."/>
            <person name="Lucas S."/>
            <person name="Lapidus A."/>
            <person name="Glavina del Rio T."/>
            <person name="Dalin E."/>
            <person name="Tice H."/>
            <person name="Bruce D."/>
            <person name="Goodwin L."/>
            <person name="Pitluck S."/>
            <person name="Sims D."/>
            <person name="Brettin T."/>
            <person name="Detter J.C."/>
            <person name="Han C."/>
            <person name="Kuske C.R."/>
            <person name="Schmutz J."/>
            <person name="Larimer F."/>
            <person name="Land M."/>
            <person name="Hauser L."/>
            <person name="Kyrpides N."/>
            <person name="Kim E."/>
            <person name="Zhao J.-S."/>
            <person name="Richardson P."/>
        </authorList>
    </citation>
    <scope>NUCLEOTIDE SEQUENCE [LARGE SCALE GENOMIC DNA]</scope>
    <source>
        <strain>HAW-EB4</strain>
    </source>
</reference>
<evidence type="ECO:0000255" key="1">
    <source>
        <dbReference type="HAMAP-Rule" id="MF_00627"/>
    </source>
</evidence>
<comment type="function">
    <text evidence="1">Catalyzes the NAD(+)-dependent oxidation of L-threonine to 2-amino-3-ketobutyrate.</text>
</comment>
<comment type="catalytic activity">
    <reaction evidence="1">
        <text>L-threonine + NAD(+) = (2S)-2-amino-3-oxobutanoate + NADH + H(+)</text>
        <dbReference type="Rhea" id="RHEA:13161"/>
        <dbReference type="ChEBI" id="CHEBI:15378"/>
        <dbReference type="ChEBI" id="CHEBI:57540"/>
        <dbReference type="ChEBI" id="CHEBI:57926"/>
        <dbReference type="ChEBI" id="CHEBI:57945"/>
        <dbReference type="ChEBI" id="CHEBI:78948"/>
        <dbReference type="EC" id="1.1.1.103"/>
    </reaction>
</comment>
<comment type="cofactor">
    <cofactor evidence="1">
        <name>Zn(2+)</name>
        <dbReference type="ChEBI" id="CHEBI:29105"/>
    </cofactor>
    <text evidence="1">Binds 2 Zn(2+) ions per subunit.</text>
</comment>
<comment type="pathway">
    <text evidence="1">Amino-acid degradation; L-threonine degradation via oxydo-reductase pathway; glycine from L-threonine: step 1/2.</text>
</comment>
<comment type="subunit">
    <text evidence="1">Homotetramer.</text>
</comment>
<comment type="subcellular location">
    <subcellularLocation>
        <location evidence="1">Cytoplasm</location>
    </subcellularLocation>
</comment>
<comment type="similarity">
    <text evidence="1">Belongs to the zinc-containing alcohol dehydrogenase family.</text>
</comment>
<accession>B0TNM4</accession>
<protein>
    <recommendedName>
        <fullName evidence="1">L-threonine 3-dehydrogenase</fullName>
        <shortName evidence="1">TDH</shortName>
        <ecNumber evidence="1">1.1.1.103</ecNumber>
    </recommendedName>
</protein>
<feature type="chain" id="PRO_1000082616" description="L-threonine 3-dehydrogenase">
    <location>
        <begin position="1"/>
        <end position="341"/>
    </location>
</feature>
<feature type="active site" description="Charge relay system" evidence="1">
    <location>
        <position position="40"/>
    </location>
</feature>
<feature type="active site" description="Charge relay system" evidence="1">
    <location>
        <position position="43"/>
    </location>
</feature>
<feature type="binding site" evidence="1">
    <location>
        <position position="38"/>
    </location>
    <ligand>
        <name>Zn(2+)</name>
        <dbReference type="ChEBI" id="CHEBI:29105"/>
        <label>1</label>
        <note>catalytic</note>
    </ligand>
</feature>
<feature type="binding site" evidence="1">
    <location>
        <position position="63"/>
    </location>
    <ligand>
        <name>Zn(2+)</name>
        <dbReference type="ChEBI" id="CHEBI:29105"/>
        <label>1</label>
        <note>catalytic</note>
    </ligand>
</feature>
<feature type="binding site" evidence="1">
    <location>
        <position position="64"/>
    </location>
    <ligand>
        <name>Zn(2+)</name>
        <dbReference type="ChEBI" id="CHEBI:29105"/>
        <label>1</label>
        <note>catalytic</note>
    </ligand>
</feature>
<feature type="binding site" evidence="1">
    <location>
        <position position="93"/>
    </location>
    <ligand>
        <name>Zn(2+)</name>
        <dbReference type="ChEBI" id="CHEBI:29105"/>
        <label>2</label>
    </ligand>
</feature>
<feature type="binding site" evidence="1">
    <location>
        <position position="96"/>
    </location>
    <ligand>
        <name>Zn(2+)</name>
        <dbReference type="ChEBI" id="CHEBI:29105"/>
        <label>2</label>
    </ligand>
</feature>
<feature type="binding site" evidence="1">
    <location>
        <position position="99"/>
    </location>
    <ligand>
        <name>Zn(2+)</name>
        <dbReference type="ChEBI" id="CHEBI:29105"/>
        <label>2</label>
    </ligand>
</feature>
<feature type="binding site" evidence="1">
    <location>
        <position position="107"/>
    </location>
    <ligand>
        <name>Zn(2+)</name>
        <dbReference type="ChEBI" id="CHEBI:29105"/>
        <label>2</label>
    </ligand>
</feature>
<feature type="binding site" evidence="1">
    <location>
        <position position="175"/>
    </location>
    <ligand>
        <name>NAD(+)</name>
        <dbReference type="ChEBI" id="CHEBI:57540"/>
    </ligand>
</feature>
<feature type="binding site" evidence="1">
    <location>
        <position position="195"/>
    </location>
    <ligand>
        <name>NAD(+)</name>
        <dbReference type="ChEBI" id="CHEBI:57540"/>
    </ligand>
</feature>
<feature type="binding site" evidence="1">
    <location>
        <position position="200"/>
    </location>
    <ligand>
        <name>NAD(+)</name>
        <dbReference type="ChEBI" id="CHEBI:57540"/>
    </ligand>
</feature>
<feature type="binding site" evidence="1">
    <location>
        <begin position="262"/>
        <end position="264"/>
    </location>
    <ligand>
        <name>NAD(+)</name>
        <dbReference type="ChEBI" id="CHEBI:57540"/>
    </ligand>
</feature>
<feature type="binding site" evidence="1">
    <location>
        <begin position="286"/>
        <end position="287"/>
    </location>
    <ligand>
        <name>NAD(+)</name>
        <dbReference type="ChEBI" id="CHEBI:57540"/>
    </ligand>
</feature>
<feature type="site" description="Important for catalytic activity for the proton relay mechanism but does not participate directly in the coordination of zinc atom" evidence="1">
    <location>
        <position position="148"/>
    </location>
</feature>
<name>TDH_SHEHH</name>
<organism>
    <name type="scientific">Shewanella halifaxensis (strain HAW-EB4)</name>
    <dbReference type="NCBI Taxonomy" id="458817"/>
    <lineage>
        <taxon>Bacteria</taxon>
        <taxon>Pseudomonadati</taxon>
        <taxon>Pseudomonadota</taxon>
        <taxon>Gammaproteobacteria</taxon>
        <taxon>Alteromonadales</taxon>
        <taxon>Shewanellaceae</taxon>
        <taxon>Shewanella</taxon>
    </lineage>
</organism>
<dbReference type="EC" id="1.1.1.103" evidence="1"/>
<dbReference type="EMBL" id="CP000931">
    <property type="protein sequence ID" value="ABZ78756.1"/>
    <property type="molecule type" value="Genomic_DNA"/>
</dbReference>
<dbReference type="RefSeq" id="WP_012279260.1">
    <property type="nucleotide sequence ID" value="NC_010334.1"/>
</dbReference>
<dbReference type="SMR" id="B0TNM4"/>
<dbReference type="STRING" id="458817.Shal_4216"/>
<dbReference type="KEGG" id="shl:Shal_4216"/>
<dbReference type="eggNOG" id="COG1063">
    <property type="taxonomic scope" value="Bacteria"/>
</dbReference>
<dbReference type="HOGENOM" id="CLU_026673_11_0_6"/>
<dbReference type="OrthoDB" id="9773078at2"/>
<dbReference type="UniPathway" id="UPA00046">
    <property type="reaction ID" value="UER00505"/>
</dbReference>
<dbReference type="Proteomes" id="UP000001317">
    <property type="component" value="Chromosome"/>
</dbReference>
<dbReference type="GO" id="GO:0005737">
    <property type="term" value="C:cytoplasm"/>
    <property type="evidence" value="ECO:0007669"/>
    <property type="project" value="UniProtKB-SubCell"/>
</dbReference>
<dbReference type="GO" id="GO:0008743">
    <property type="term" value="F:L-threonine 3-dehydrogenase activity"/>
    <property type="evidence" value="ECO:0007669"/>
    <property type="project" value="UniProtKB-UniRule"/>
</dbReference>
<dbReference type="GO" id="GO:0008270">
    <property type="term" value="F:zinc ion binding"/>
    <property type="evidence" value="ECO:0007669"/>
    <property type="project" value="UniProtKB-UniRule"/>
</dbReference>
<dbReference type="GO" id="GO:0019518">
    <property type="term" value="P:L-threonine catabolic process to glycine"/>
    <property type="evidence" value="ECO:0007669"/>
    <property type="project" value="UniProtKB-UniPathway"/>
</dbReference>
<dbReference type="Gene3D" id="3.90.180.10">
    <property type="entry name" value="Medium-chain alcohol dehydrogenases, catalytic domain"/>
    <property type="match status" value="1"/>
</dbReference>
<dbReference type="Gene3D" id="3.40.50.720">
    <property type="entry name" value="NAD(P)-binding Rossmann-like Domain"/>
    <property type="match status" value="1"/>
</dbReference>
<dbReference type="HAMAP" id="MF_00627">
    <property type="entry name" value="Thr_dehydrog"/>
    <property type="match status" value="1"/>
</dbReference>
<dbReference type="InterPro" id="IPR013149">
    <property type="entry name" value="ADH-like_C"/>
</dbReference>
<dbReference type="InterPro" id="IPR013154">
    <property type="entry name" value="ADH-like_N"/>
</dbReference>
<dbReference type="InterPro" id="IPR002328">
    <property type="entry name" value="ADH_Zn_CS"/>
</dbReference>
<dbReference type="InterPro" id="IPR011032">
    <property type="entry name" value="GroES-like_sf"/>
</dbReference>
<dbReference type="InterPro" id="IPR004627">
    <property type="entry name" value="L-Threonine_3-DHase"/>
</dbReference>
<dbReference type="InterPro" id="IPR036291">
    <property type="entry name" value="NAD(P)-bd_dom_sf"/>
</dbReference>
<dbReference type="InterPro" id="IPR020843">
    <property type="entry name" value="PKS_ER"/>
</dbReference>
<dbReference type="InterPro" id="IPR050129">
    <property type="entry name" value="Zn_alcohol_dh"/>
</dbReference>
<dbReference type="NCBIfam" id="NF003808">
    <property type="entry name" value="PRK05396.1"/>
    <property type="match status" value="1"/>
</dbReference>
<dbReference type="NCBIfam" id="TIGR00692">
    <property type="entry name" value="tdh"/>
    <property type="match status" value="1"/>
</dbReference>
<dbReference type="PANTHER" id="PTHR43401">
    <property type="entry name" value="L-THREONINE 3-DEHYDROGENASE"/>
    <property type="match status" value="1"/>
</dbReference>
<dbReference type="PANTHER" id="PTHR43401:SF2">
    <property type="entry name" value="L-THREONINE 3-DEHYDROGENASE"/>
    <property type="match status" value="1"/>
</dbReference>
<dbReference type="Pfam" id="PF08240">
    <property type="entry name" value="ADH_N"/>
    <property type="match status" value="1"/>
</dbReference>
<dbReference type="Pfam" id="PF00107">
    <property type="entry name" value="ADH_zinc_N"/>
    <property type="match status" value="1"/>
</dbReference>
<dbReference type="SMART" id="SM00829">
    <property type="entry name" value="PKS_ER"/>
    <property type="match status" value="1"/>
</dbReference>
<dbReference type="SUPFAM" id="SSF50129">
    <property type="entry name" value="GroES-like"/>
    <property type="match status" value="1"/>
</dbReference>
<dbReference type="SUPFAM" id="SSF51735">
    <property type="entry name" value="NAD(P)-binding Rossmann-fold domains"/>
    <property type="match status" value="1"/>
</dbReference>
<dbReference type="PROSITE" id="PS00059">
    <property type="entry name" value="ADH_ZINC"/>
    <property type="match status" value="1"/>
</dbReference>
<gene>
    <name evidence="1" type="primary">tdh</name>
    <name type="ordered locus">Shal_4216</name>
</gene>
<sequence length="341" mass="37248">MKALSKLKPEEGIWMVDAPKPEVGHNDLLIKIRKTAICGTDVHIYNWDEWSQNTIPVPMVVGHEYVGEVVGMGQEVRGFTIGDRVSGEGHITCGHCRNCRGGRTHLCRNTSGVGVNREGAFAEYLVIPAFNAFKIPDDISDDLASIFDPFGNAVHTALSFDLVGEDVLITGAGPIGIMAAAVCRHVGARHVVITDVNEYRLELAQKMGATRAVNVAKEKLEDVMQELGMTEGFDVGLEMSGVPSAFHSMLDTMNHGGKIAMLGIPGGEMAIDWSKVIFKGLIIKGIYGREMFETWYKMASLIQSGLDISPIITHHFSIDEFQQGFDAMRSGQSGKVILNWD</sequence>
<proteinExistence type="inferred from homology"/>